<reference key="1">
    <citation type="journal article" date="1989" name="J. Neurosci.">
        <title>A muscle acetylcholine receptor is expressed in the human cerebellar medulloblastoma cell line TE671.</title>
        <authorList>
            <person name="Luther M.A."/>
            <person name="Schoepfer R."/>
            <person name="Whiting P."/>
            <person name="Casey B."/>
            <person name="Blatt Y."/>
            <person name="Montal M.S."/>
            <person name="Montal M."/>
            <person name="Lindstrom J."/>
        </authorList>
    </citation>
    <scope>NUCLEOTIDE SEQUENCE [MRNA] (ISOFORM 1)</scope>
</reference>
<reference key="2">
    <citation type="journal article" date="2004" name="Nat. Genet.">
        <title>Complete sequencing and characterization of 21,243 full-length human cDNAs.</title>
        <authorList>
            <person name="Ota T."/>
            <person name="Suzuki Y."/>
            <person name="Nishikawa T."/>
            <person name="Otsuki T."/>
            <person name="Sugiyama T."/>
            <person name="Irie R."/>
            <person name="Wakamatsu A."/>
            <person name="Hayashi K."/>
            <person name="Sato H."/>
            <person name="Nagai K."/>
            <person name="Kimura K."/>
            <person name="Makita H."/>
            <person name="Sekine M."/>
            <person name="Obayashi M."/>
            <person name="Nishi T."/>
            <person name="Shibahara T."/>
            <person name="Tanaka T."/>
            <person name="Ishii S."/>
            <person name="Yamamoto J."/>
            <person name="Saito K."/>
            <person name="Kawai Y."/>
            <person name="Isono Y."/>
            <person name="Nakamura Y."/>
            <person name="Nagahari K."/>
            <person name="Murakami K."/>
            <person name="Yasuda T."/>
            <person name="Iwayanagi T."/>
            <person name="Wagatsuma M."/>
            <person name="Shiratori A."/>
            <person name="Sudo H."/>
            <person name="Hosoiri T."/>
            <person name="Kaku Y."/>
            <person name="Kodaira H."/>
            <person name="Kondo H."/>
            <person name="Sugawara M."/>
            <person name="Takahashi M."/>
            <person name="Kanda K."/>
            <person name="Yokoi T."/>
            <person name="Furuya T."/>
            <person name="Kikkawa E."/>
            <person name="Omura Y."/>
            <person name="Abe K."/>
            <person name="Kamihara K."/>
            <person name="Katsuta N."/>
            <person name="Sato K."/>
            <person name="Tanikawa M."/>
            <person name="Yamazaki M."/>
            <person name="Ninomiya K."/>
            <person name="Ishibashi T."/>
            <person name="Yamashita H."/>
            <person name="Murakawa K."/>
            <person name="Fujimori K."/>
            <person name="Tanai H."/>
            <person name="Kimata M."/>
            <person name="Watanabe M."/>
            <person name="Hiraoka S."/>
            <person name="Chiba Y."/>
            <person name="Ishida S."/>
            <person name="Ono Y."/>
            <person name="Takiguchi S."/>
            <person name="Watanabe S."/>
            <person name="Yosida M."/>
            <person name="Hotuta T."/>
            <person name="Kusano J."/>
            <person name="Kanehori K."/>
            <person name="Takahashi-Fujii A."/>
            <person name="Hara H."/>
            <person name="Tanase T.-O."/>
            <person name="Nomura Y."/>
            <person name="Togiya S."/>
            <person name="Komai F."/>
            <person name="Hara R."/>
            <person name="Takeuchi K."/>
            <person name="Arita M."/>
            <person name="Imose N."/>
            <person name="Musashino K."/>
            <person name="Yuuki H."/>
            <person name="Oshima A."/>
            <person name="Sasaki N."/>
            <person name="Aotsuka S."/>
            <person name="Yoshikawa Y."/>
            <person name="Matsunawa H."/>
            <person name="Ichihara T."/>
            <person name="Shiohata N."/>
            <person name="Sano S."/>
            <person name="Moriya S."/>
            <person name="Momiyama H."/>
            <person name="Satoh N."/>
            <person name="Takami S."/>
            <person name="Terashima Y."/>
            <person name="Suzuki O."/>
            <person name="Nakagawa S."/>
            <person name="Senoh A."/>
            <person name="Mizoguchi H."/>
            <person name="Goto Y."/>
            <person name="Shimizu F."/>
            <person name="Wakebe H."/>
            <person name="Hishigaki H."/>
            <person name="Watanabe T."/>
            <person name="Sugiyama A."/>
            <person name="Takemoto M."/>
            <person name="Kawakami B."/>
            <person name="Yamazaki M."/>
            <person name="Watanabe K."/>
            <person name="Kumagai A."/>
            <person name="Itakura S."/>
            <person name="Fukuzumi Y."/>
            <person name="Fujimori Y."/>
            <person name="Komiyama M."/>
            <person name="Tashiro H."/>
            <person name="Tanigami A."/>
            <person name="Fujiwara T."/>
            <person name="Ono T."/>
            <person name="Yamada K."/>
            <person name="Fujii Y."/>
            <person name="Ozaki K."/>
            <person name="Hirao M."/>
            <person name="Ohmori Y."/>
            <person name="Kawabata A."/>
            <person name="Hikiji T."/>
            <person name="Kobatake N."/>
            <person name="Inagaki H."/>
            <person name="Ikema Y."/>
            <person name="Okamoto S."/>
            <person name="Okitani R."/>
            <person name="Kawakami T."/>
            <person name="Noguchi S."/>
            <person name="Itoh T."/>
            <person name="Shigeta K."/>
            <person name="Senba T."/>
            <person name="Matsumura K."/>
            <person name="Nakajima Y."/>
            <person name="Mizuno T."/>
            <person name="Morinaga M."/>
            <person name="Sasaki M."/>
            <person name="Togashi T."/>
            <person name="Oyama M."/>
            <person name="Hata H."/>
            <person name="Watanabe M."/>
            <person name="Komatsu T."/>
            <person name="Mizushima-Sugano J."/>
            <person name="Satoh T."/>
            <person name="Shirai Y."/>
            <person name="Takahashi Y."/>
            <person name="Nakagawa K."/>
            <person name="Okumura K."/>
            <person name="Nagase T."/>
            <person name="Nomura N."/>
            <person name="Kikuchi H."/>
            <person name="Masuho Y."/>
            <person name="Yamashita R."/>
            <person name="Nakai K."/>
            <person name="Yada T."/>
            <person name="Nakamura Y."/>
            <person name="Ohara O."/>
            <person name="Isogai T."/>
            <person name="Sugano S."/>
        </authorList>
    </citation>
    <scope>NUCLEOTIDE SEQUENCE [LARGE SCALE MRNA] (ISOFORMS 1 AND 2)</scope>
    <source>
        <tissue>Pericardium</tissue>
    </source>
</reference>
<reference key="3">
    <citation type="journal article" date="2005" name="Nature">
        <title>Generation and annotation of the DNA sequences of human chromosomes 2 and 4.</title>
        <authorList>
            <person name="Hillier L.W."/>
            <person name="Graves T.A."/>
            <person name="Fulton R.S."/>
            <person name="Fulton L.A."/>
            <person name="Pepin K.H."/>
            <person name="Minx P."/>
            <person name="Wagner-McPherson C."/>
            <person name="Layman D."/>
            <person name="Wylie K."/>
            <person name="Sekhon M."/>
            <person name="Becker M.C."/>
            <person name="Fewell G.A."/>
            <person name="Delehaunty K.D."/>
            <person name="Miner T.L."/>
            <person name="Nash W.E."/>
            <person name="Kremitzki C."/>
            <person name="Oddy L."/>
            <person name="Du H."/>
            <person name="Sun H."/>
            <person name="Bradshaw-Cordum H."/>
            <person name="Ali J."/>
            <person name="Carter J."/>
            <person name="Cordes M."/>
            <person name="Harris A."/>
            <person name="Isak A."/>
            <person name="van Brunt A."/>
            <person name="Nguyen C."/>
            <person name="Du F."/>
            <person name="Courtney L."/>
            <person name="Kalicki J."/>
            <person name="Ozersky P."/>
            <person name="Abbott S."/>
            <person name="Armstrong J."/>
            <person name="Belter E.A."/>
            <person name="Caruso L."/>
            <person name="Cedroni M."/>
            <person name="Cotton M."/>
            <person name="Davidson T."/>
            <person name="Desai A."/>
            <person name="Elliott G."/>
            <person name="Erb T."/>
            <person name="Fronick C."/>
            <person name="Gaige T."/>
            <person name="Haakenson W."/>
            <person name="Haglund K."/>
            <person name="Holmes A."/>
            <person name="Harkins R."/>
            <person name="Kim K."/>
            <person name="Kruchowski S.S."/>
            <person name="Strong C.M."/>
            <person name="Grewal N."/>
            <person name="Goyea E."/>
            <person name="Hou S."/>
            <person name="Levy A."/>
            <person name="Martinka S."/>
            <person name="Mead K."/>
            <person name="McLellan M.D."/>
            <person name="Meyer R."/>
            <person name="Randall-Maher J."/>
            <person name="Tomlinson C."/>
            <person name="Dauphin-Kohlberg S."/>
            <person name="Kozlowicz-Reilly A."/>
            <person name="Shah N."/>
            <person name="Swearengen-Shahid S."/>
            <person name="Snider J."/>
            <person name="Strong J.T."/>
            <person name="Thompson J."/>
            <person name="Yoakum M."/>
            <person name="Leonard S."/>
            <person name="Pearman C."/>
            <person name="Trani L."/>
            <person name="Radionenko M."/>
            <person name="Waligorski J.E."/>
            <person name="Wang C."/>
            <person name="Rock S.M."/>
            <person name="Tin-Wollam A.-M."/>
            <person name="Maupin R."/>
            <person name="Latreille P."/>
            <person name="Wendl M.C."/>
            <person name="Yang S.-P."/>
            <person name="Pohl C."/>
            <person name="Wallis J.W."/>
            <person name="Spieth J."/>
            <person name="Bieri T.A."/>
            <person name="Berkowicz N."/>
            <person name="Nelson J.O."/>
            <person name="Osborne J."/>
            <person name="Ding L."/>
            <person name="Meyer R."/>
            <person name="Sabo A."/>
            <person name="Shotland Y."/>
            <person name="Sinha P."/>
            <person name="Wohldmann P.E."/>
            <person name="Cook L.L."/>
            <person name="Hickenbotham M.T."/>
            <person name="Eldred J."/>
            <person name="Williams D."/>
            <person name="Jones T.A."/>
            <person name="She X."/>
            <person name="Ciccarelli F.D."/>
            <person name="Izaurralde E."/>
            <person name="Taylor J."/>
            <person name="Schmutz J."/>
            <person name="Myers R.M."/>
            <person name="Cox D.R."/>
            <person name="Huang X."/>
            <person name="McPherson J.D."/>
            <person name="Mardis E.R."/>
            <person name="Clifton S.W."/>
            <person name="Warren W.C."/>
            <person name="Chinwalla A.T."/>
            <person name="Eddy S.R."/>
            <person name="Marra M.A."/>
            <person name="Ovcharenko I."/>
            <person name="Furey T.S."/>
            <person name="Miller W."/>
            <person name="Eichler E.E."/>
            <person name="Bork P."/>
            <person name="Suyama M."/>
            <person name="Torrents D."/>
            <person name="Waterston R.H."/>
            <person name="Wilson R.K."/>
        </authorList>
    </citation>
    <scope>NUCLEOTIDE SEQUENCE [LARGE SCALE GENOMIC DNA]</scope>
</reference>
<reference key="4">
    <citation type="submission" date="2005-07" db="EMBL/GenBank/DDBJ databases">
        <authorList>
            <person name="Mural R.J."/>
            <person name="Istrail S."/>
            <person name="Sutton G."/>
            <person name="Florea L."/>
            <person name="Halpern A.L."/>
            <person name="Mobarry C.M."/>
            <person name="Lippert R."/>
            <person name="Walenz B."/>
            <person name="Shatkay H."/>
            <person name="Dew I."/>
            <person name="Miller J.R."/>
            <person name="Flanigan M.J."/>
            <person name="Edwards N.J."/>
            <person name="Bolanos R."/>
            <person name="Fasulo D."/>
            <person name="Halldorsson B.V."/>
            <person name="Hannenhalli S."/>
            <person name="Turner R."/>
            <person name="Yooseph S."/>
            <person name="Lu F."/>
            <person name="Nusskern D.R."/>
            <person name="Shue B.C."/>
            <person name="Zheng X.H."/>
            <person name="Zhong F."/>
            <person name="Delcher A.L."/>
            <person name="Huson D.H."/>
            <person name="Kravitz S.A."/>
            <person name="Mouchard L."/>
            <person name="Reinert K."/>
            <person name="Remington K.A."/>
            <person name="Clark A.G."/>
            <person name="Waterman M.S."/>
            <person name="Eichler E.E."/>
            <person name="Adams M.D."/>
            <person name="Hunkapiller M.W."/>
            <person name="Myers E.W."/>
            <person name="Venter J.C."/>
        </authorList>
    </citation>
    <scope>NUCLEOTIDE SEQUENCE [LARGE SCALE GENOMIC DNA]</scope>
</reference>
<reference key="5">
    <citation type="journal article" date="2004" name="Genome Res.">
        <title>The status, quality, and expansion of the NIH full-length cDNA project: the Mammalian Gene Collection (MGC).</title>
        <authorList>
            <consortium name="The MGC Project Team"/>
        </authorList>
    </citation>
    <scope>NUCLEOTIDE SEQUENCE [LARGE SCALE MRNA] (ISOFORM 1)</scope>
    <source>
        <tissue>Heart</tissue>
        <tissue>Lung</tissue>
    </source>
</reference>
<reference key="6">
    <citation type="journal article" date="2004" name="Biochemistry">
        <title>Alpha-conotoxins ImI and ImII target distinct regions of the human alpha7 nicotinic acetylcholine receptor and distinguish human nicotinic receptor subtypes.</title>
        <authorList>
            <person name="Ellison M."/>
            <person name="Gao F."/>
            <person name="Wang H.L."/>
            <person name="Sine S.M."/>
            <person name="McIntosh J.M."/>
            <person name="Olivera B.M."/>
        </authorList>
    </citation>
    <scope>SUBUNIT</scope>
</reference>
<reference key="7">
    <citation type="journal article" date="2006" name="Brain">
        <title>CHRND mutation causes a congenital myasthenic syndrome by impairing co-clustering of the acetylcholine receptor with rapsyn.</title>
        <authorList>
            <person name="Mueller J.S."/>
            <person name="Baumeister S.K."/>
            <person name="Schara U."/>
            <person name="Cossins J."/>
            <person name="Krause S."/>
            <person name="von der Hagen M."/>
            <person name="Huebner A."/>
            <person name="Webster R."/>
            <person name="Beeson D."/>
            <person name="Lochmueller H."/>
            <person name="Abicht A."/>
        </authorList>
    </citation>
    <scope>INVOLVEMENT IN CMS3C</scope>
    <scope>VARIANT CMS3C LYS-402</scope>
    <scope>CHARACTERIZATION OF VARIANT CMS3C LYS-402</scope>
</reference>
<reference key="8">
    <citation type="journal article" date="2008" name="J. Clin. Invest.">
        <title>Congenital myasthenia-related AChR delta subunit mutation interferes with intersubunit communication essential for channel gating.</title>
        <authorList>
            <person name="Shen X.M."/>
            <person name="Fukuda T."/>
            <person name="Ohno K."/>
            <person name="Sine S.M."/>
            <person name="Engel A.G."/>
        </authorList>
    </citation>
    <scope>INVOLVEMENT IN CMS3C</scope>
    <scope>VARIANTS CMS3B PRO-42 AND LYS-79</scope>
    <scope>VARIANT LEU-114</scope>
    <scope>CHARACTERIZATION OF VARIANTS CMS3B PRO-42 AND LYS-79</scope>
    <scope>CHARACTERIZATION OF VARIANT LEU-114</scope>
</reference>
<reference key="9">
    <citation type="journal article" date="2016" name="Hum. Mutat.">
        <title>Mutations causing slow-channel myasthenia reveal that a valine ring in the channel pore of muscle AChR is optimized for stabilizing channel gating.</title>
        <authorList>
            <person name="Shen X.M."/>
            <person name="Okuno T."/>
            <person name="Milone M."/>
            <person name="Otsuka K."/>
            <person name="Takahashi K."/>
            <person name="Komaki H."/>
            <person name="Giles E."/>
            <person name="Ohno K."/>
            <person name="Engel A.G."/>
        </authorList>
    </citation>
    <scope>FUNCTION</scope>
    <scope>MUTAGENESIS OF VAL-290</scope>
</reference>
<reference key="10">
    <citation type="journal article" date="1996" name="Hum. Mol. Genet.">
        <title>New mutations in acetylcholine receptor subunit genes reveal heterogeneity in the slow-channel congenital myasthenic syndrome.</title>
        <authorList>
            <person name="Engel A.G."/>
            <person name="Ohno K."/>
            <person name="Milone M."/>
            <person name="Wang H.-L."/>
            <person name="Nakano S."/>
            <person name="Bouzat C."/>
            <person name="Pruitt J.N. II"/>
            <person name="Hutchinson D.O."/>
            <person name="Brengman J.M."/>
            <person name="Bren N."/>
            <person name="Sieb J.P."/>
            <person name="Sine S.M."/>
        </authorList>
    </citation>
    <scope>VARIANT GLU-288</scope>
</reference>
<reference key="11">
    <citation type="journal article" date="2002" name="Ann. Neurol.">
        <title>Novel delta subunit mutation in slow-channel syndrome causes severe weakness by novel mechanisms.</title>
        <authorList>
            <person name="Gomez C.M."/>
            <person name="Maselli R.A."/>
            <person name="Vohra B.P.S."/>
            <person name="Navedo M."/>
            <person name="Stiles J.R."/>
            <person name="Charnet P."/>
            <person name="Schott K."/>
            <person name="Rojas L."/>
            <person name="Keesey J."/>
            <person name="Verity A."/>
            <person name="Wollmann R.W."/>
            <person name="Lasalde-Dominicci J."/>
        </authorList>
    </citation>
    <scope>VARIANT CMS3A PHE-289</scope>
    <scope>CHARACTERIZATION OF VARIANT CMS3A PHE-289</scope>
</reference>
<reference key="12">
    <citation type="journal article" date="2001" name="J. Clin. Invest.">
        <title>Acetylcholine receptor delta subunit mutations underlie a fast-channel myasthenic syndrome and arthrogryposis multiplex congenita.</title>
        <authorList>
            <person name="Brownlow S."/>
            <person name="Webster R."/>
            <person name="Croxen R."/>
            <person name="Brydson M."/>
            <person name="Neville B."/>
            <person name="Lin J.-P."/>
            <person name="Vincent A."/>
            <person name="Newsom-Davis J."/>
            <person name="Beeson D."/>
        </authorList>
    </citation>
    <scope>VARIANT CMS3B LYS-80</scope>
    <scope>CHARACTERIZATION OF VARIANT CMS3B LYS-80</scope>
</reference>
<reference key="13">
    <citation type="journal article" date="2002" name="Neurology">
        <title>Congenital myasthenic syndrome caused by low-expressor fast-channel AChR delta subunit mutation.</title>
        <authorList>
            <person name="Shen X.-M."/>
            <person name="Ohno K."/>
            <person name="Fukudome T."/>
            <person name="Tsujino A."/>
            <person name="Brengman J.M."/>
            <person name="De Vivo D.C."/>
            <person name="Packer R.J."/>
            <person name="Engel A.G."/>
        </authorList>
    </citation>
    <scope>VARIANT CMS3B GLN-271</scope>
    <scope>CHARACTERIZATION OF VARIANT CMS3B GLN-271</scope>
</reference>
<reference key="14">
    <citation type="journal article" date="2006" name="Science">
        <title>The consensus coding sequences of human breast and colorectal cancers.</title>
        <authorList>
            <person name="Sjoeblom T."/>
            <person name="Jones S."/>
            <person name="Wood L.D."/>
            <person name="Parsons D.W."/>
            <person name="Lin J."/>
            <person name="Barber T.D."/>
            <person name="Mandelker D."/>
            <person name="Leary R.J."/>
            <person name="Ptak J."/>
            <person name="Silliman N."/>
            <person name="Szabo S."/>
            <person name="Buckhaults P."/>
            <person name="Farrell C."/>
            <person name="Meeh P."/>
            <person name="Markowitz S.D."/>
            <person name="Willis J."/>
            <person name="Dawson D."/>
            <person name="Willson J.K.V."/>
            <person name="Gazdar A.F."/>
            <person name="Hartigan J."/>
            <person name="Wu L."/>
            <person name="Liu C."/>
            <person name="Parmigiani G."/>
            <person name="Park B.H."/>
            <person name="Bachman K.E."/>
            <person name="Papadopoulos N."/>
            <person name="Vogelstein B."/>
            <person name="Kinzler K.W."/>
            <person name="Velculescu V.E."/>
        </authorList>
    </citation>
    <scope>VARIANT [LARGE SCALE ANALYSIS] GLU-398</scope>
</reference>
<reference key="15">
    <citation type="journal article" date="2008" name="Am. J. Hum. Genet.">
        <title>Acetylcholine receptor pathway mutations explain various fetal akinesia deformation sequence disorders.</title>
        <authorList>
            <person name="Michalk A."/>
            <person name="Stricker S."/>
            <person name="Becker J."/>
            <person name="Rupps R."/>
            <person name="Pantzar T."/>
            <person name="Miertus J."/>
            <person name="Botta G."/>
            <person name="Naretto V.G."/>
            <person name="Janetzki C."/>
            <person name="Yaqoob N."/>
            <person name="Ott C.-E."/>
            <person name="Seelow D."/>
            <person name="Wieczorek D."/>
            <person name="Fiebig B."/>
            <person name="Wirth B."/>
            <person name="Hoopmann M."/>
            <person name="Walther M."/>
            <person name="Koerber F."/>
            <person name="Blankenburg M."/>
            <person name="Mundlos S."/>
            <person name="Heller R."/>
            <person name="Hoffmann K."/>
        </authorList>
    </citation>
    <scope>VARIANT LMPS LEU-95</scope>
</reference>
<sequence length="517" mass="58895">MEGPVLTLGLLAALAVCGSWGLNEEERLIRHLFQEKGYNKELRPVAHKEESVDVALALTLSNLISLKEVEETLTTNVWIEHGWTDNRLKWNAEEFGNISVLRLPPDMVWLPEIVLENNNDGSFQISYSCNVLVYHYGFVYWLPPAIFRSSCPISVTYFPFDWQNCSLKFSSLKYTAKEITLSLKQDAKENRTYPVEWIIIDPEGFTENGEWEIVHRPARVNVDPRAPLDSPSRQDITFYLIIRRKPLFYIINILVPCVLISFMVNLVFYLPADSGEKTSVAISVLLAQSVFLLLISKRLPATSMAIPLIGKFLLFGMVLVTMVVVICVIVLNIHFRTPSTHVLSEGVKKLFLETLPELLHMSRPAEDGPSPGALVRRSSSLGYISKAEEYFLLKSRSDLMFEKQSERHGLARRLTTARRPPASSEQAQQELFNELKPAVDGANFIVNHMRDQNNYNEEKDSWNRVARTVDRLCLFVVTPVMVVGTAWIFLQGVYNQPPPQPFPGDPYSYNVQDKRFI</sequence>
<keyword id="KW-0025">Alternative splicing</keyword>
<keyword id="KW-1003">Cell membrane</keyword>
<keyword id="KW-1004">Congenital myasthenic syndrome</keyword>
<keyword id="KW-0225">Disease variant</keyword>
<keyword id="KW-1015">Disulfide bond</keyword>
<keyword id="KW-0325">Glycoprotein</keyword>
<keyword id="KW-0407">Ion channel</keyword>
<keyword id="KW-0406">Ion transport</keyword>
<keyword id="KW-1071">Ligand-gated ion channel</keyword>
<keyword id="KW-0472">Membrane</keyword>
<keyword id="KW-0597">Phosphoprotein</keyword>
<keyword id="KW-0628">Postsynaptic cell membrane</keyword>
<keyword id="KW-0675">Receptor</keyword>
<keyword id="KW-1185">Reference proteome</keyword>
<keyword id="KW-0732">Signal</keyword>
<keyword id="KW-0770">Synapse</keyword>
<keyword id="KW-0812">Transmembrane</keyword>
<keyword id="KW-1133">Transmembrane helix</keyword>
<keyword id="KW-0813">Transport</keyword>
<gene>
    <name evidence="16" type="primary">CHRND</name>
    <name type="synonym">ACHRD</name>
</gene>
<organism>
    <name type="scientific">Homo sapiens</name>
    <name type="common">Human</name>
    <dbReference type="NCBI Taxonomy" id="9606"/>
    <lineage>
        <taxon>Eukaryota</taxon>
        <taxon>Metazoa</taxon>
        <taxon>Chordata</taxon>
        <taxon>Craniata</taxon>
        <taxon>Vertebrata</taxon>
        <taxon>Euteleostomi</taxon>
        <taxon>Mammalia</taxon>
        <taxon>Eutheria</taxon>
        <taxon>Euarchontoglires</taxon>
        <taxon>Primates</taxon>
        <taxon>Haplorrhini</taxon>
        <taxon>Catarrhini</taxon>
        <taxon>Hominidae</taxon>
        <taxon>Homo</taxon>
    </lineage>
</organism>
<comment type="function">
    <text evidence="12">After binding acetylcholine, the AChR responds by an extensive change in conformation that affects all subunits and leads to opening of an ion-conducting channel across the plasma membrane.</text>
</comment>
<comment type="catalytic activity">
    <reaction evidence="2">
        <text>K(+)(in) = K(+)(out)</text>
        <dbReference type="Rhea" id="RHEA:29463"/>
        <dbReference type="ChEBI" id="CHEBI:29103"/>
    </reaction>
</comment>
<comment type="catalytic activity">
    <reaction evidence="2">
        <text>Na(+)(in) = Na(+)(out)</text>
        <dbReference type="Rhea" id="RHEA:34963"/>
        <dbReference type="ChEBI" id="CHEBI:29101"/>
    </reaction>
</comment>
<comment type="subunit">
    <text evidence="7">Pentamer of two alpha chains, and one each of the beta, delta, and gamma (in immature muscle) or epsilon (in mature muscle) chains. The muscle heteropentamer composed of alpha-1, beta-1, delta, epsilon subunits interacts with the alpha-conotoxin ImII (PubMed:15609996).</text>
</comment>
<comment type="subcellular location">
    <subcellularLocation>
        <location>Postsynaptic cell membrane</location>
        <topology>Multi-pass membrane protein</topology>
    </subcellularLocation>
    <subcellularLocation>
        <location>Cell membrane</location>
        <topology>Multi-pass membrane protein</topology>
    </subcellularLocation>
</comment>
<comment type="alternative products">
    <event type="alternative splicing"/>
    <isoform>
        <id>Q07001-1</id>
        <name>1</name>
        <sequence type="displayed"/>
    </isoform>
    <isoform>
        <id>Q07001-2</id>
        <name>2</name>
        <sequence type="described" ref="VSP_046423"/>
    </isoform>
</comment>
<comment type="disease" evidence="10">
    <disease id="DI-01895">
        <name>Multiple pterygium syndrome, lethal type</name>
        <acronym>LMPS</acronym>
        <description>Multiple pterygia are found infrequently in children with arthrogryposis and in fetuses with fetal akinesia syndrome. In lethal multiple pterygium syndrome there is intrauterine growth retardation, multiple pterygia, and flexion contractures causing severe arthrogryposis and fetal akinesia. Subcutaneous edema can be severe, causing fetal hydrops with cystic hygroma and lung hypoplasia. Oligohydramnios and facial anomalies are frequent.</description>
        <dbReference type="MIM" id="253290"/>
    </disease>
    <text>The disease is caused by variants affecting the gene represented in this entry.</text>
</comment>
<comment type="disease" evidence="5">
    <disease id="DI-04394">
        <name>Myasthenic syndrome, congenital, 3A, slow-channel</name>
        <acronym>CMS3A</acronym>
        <description>A form of congenital myasthenic syndrome, a group of disorders characterized by failure of neuromuscular transmission, including pre-synaptic, synaptic, and post-synaptic disorders that are not of autoimmune origin. Clinical features are easy fatigability and muscle weakness affecting the axial and limb muscles (with hypotonia in early-onset forms), the ocular muscles (leading to ptosis and ophthalmoplegia), and the facial and bulbar musculature (affecting sucking and swallowing, and leading to dysphonia). The symptoms fluctuate and worsen with physical effort. CMS3A is a slow-channel myasthenic syndrome. It is caused by kinetic abnormalities of the AChR, resulting in prolonged AChR channel opening episodes, prolonged endplate currents, and depolarization block. This is associated with calcium overload, which may contribute to subsequent degeneration of the endplate and postsynaptic membrane.</description>
        <dbReference type="MIM" id="616321"/>
    </disease>
    <text>The disease is caused by variants affecting the gene represented in this entry.</text>
</comment>
<comment type="disease" evidence="4 6 11">
    <disease id="DI-04395">
        <name>Myasthenic syndrome, congenital, 3B, fast-channel</name>
        <acronym>CMS3B</acronym>
        <description>A form of congenital myasthenic syndrome, a group of disorders characterized by failure of neuromuscular transmission, including pre-synaptic, synaptic, and post-synaptic disorders that are not of autoimmune origin. Clinical features are easy fatigability and muscle weakness affecting the axial and limb muscles (with hypotonia in early-onset forms), the ocular muscles (leading to ptosis and ophthalmoplegia), and the facial and bulbar musculature (affecting sucking and swallowing, and leading to dysphonia). The symptoms fluctuate and worsen with physical effort. CMS3B is a fast-channel myasthenic syndrome. It is caused by kinetic abnormalities of the AChR, resulting in brief opening and activity of the channel, with a rapid decay in endplate current, failure to achieve threshold depolarization of the endplate and consequent failure to fire an action potential.</description>
        <dbReference type="MIM" id="616322"/>
    </disease>
    <text>The disease is caused by variants affecting the gene represented in this entry.</text>
</comment>
<comment type="disease" evidence="8 11">
    <disease id="DI-04399">
        <name>Myasthenic syndrome, congenital, 3C, associated with acetylcholine receptor deficiency</name>
        <acronym>CMS3C</acronym>
        <description>A form of congenital myasthenic syndrome, a group of disorders characterized by failure of neuromuscular transmission, including pre-synaptic, synaptic, and post-synaptic disorders that are not of autoimmune origin. Clinical features are easy fatigability and muscle weakness affecting the axial and limb muscles (with hypotonia in early-onset forms), the ocular muscles (leading to ptosis and ophthalmoplegia), and the facial and bulbar musculature (affecting sucking and swallowing, and leading to dysphonia). The symptoms fluctuate and worsen with physical effort. CMS3C is an autosomal recessive disorder of postsynaptic neuromuscular transmission, due to deficiency of AChR at the endplate that results in low amplitude of the miniature endplate potential and current.</description>
        <dbReference type="MIM" id="616323"/>
    </disease>
    <text>The disease is caused by variants affecting the gene represented in this entry.</text>
</comment>
<comment type="similarity">
    <text evidence="15">Belongs to the ligand-gated ion channel (TC 1.A.9) family. Acetylcholine receptor (TC 1.A.9.1) subfamily. Delta/CHRND sub-subfamily.</text>
</comment>
<name>ACHD_HUMAN</name>
<dbReference type="EMBL" id="X55019">
    <property type="protein sequence ID" value="CAA38759.1"/>
    <property type="molecule type" value="mRNA"/>
</dbReference>
<dbReference type="EMBL" id="AK291526">
    <property type="protein sequence ID" value="BAF84215.1"/>
    <property type="molecule type" value="mRNA"/>
</dbReference>
<dbReference type="EMBL" id="AK300109">
    <property type="protein sequence ID" value="BAG61904.1"/>
    <property type="molecule type" value="mRNA"/>
</dbReference>
<dbReference type="EMBL" id="AK315297">
    <property type="protein sequence ID" value="BAG37703.1"/>
    <property type="molecule type" value="mRNA"/>
</dbReference>
<dbReference type="EMBL" id="AC092165">
    <property type="protein sequence ID" value="AAY24102.1"/>
    <property type="molecule type" value="Genomic_DNA"/>
</dbReference>
<dbReference type="EMBL" id="CH471063">
    <property type="protein sequence ID" value="EAW71003.1"/>
    <property type="molecule type" value="Genomic_DNA"/>
</dbReference>
<dbReference type="EMBL" id="BC093923">
    <property type="protein sequence ID" value="AAH93923.1"/>
    <property type="molecule type" value="mRNA"/>
</dbReference>
<dbReference type="EMBL" id="BC093925">
    <property type="protein sequence ID" value="AAH93925.1"/>
    <property type="molecule type" value="mRNA"/>
</dbReference>
<dbReference type="CCDS" id="CCDS2494.1">
    <molecule id="Q07001-1"/>
</dbReference>
<dbReference type="CCDS" id="CCDS58754.1">
    <molecule id="Q07001-2"/>
</dbReference>
<dbReference type="PIR" id="A60916">
    <property type="entry name" value="A60916"/>
</dbReference>
<dbReference type="RefSeq" id="NP_000742.1">
    <molecule id="Q07001-1"/>
    <property type="nucleotide sequence ID" value="NM_000751.3"/>
</dbReference>
<dbReference type="RefSeq" id="NP_001243586.1">
    <molecule id="Q07001-2"/>
    <property type="nucleotide sequence ID" value="NM_001256657.2"/>
</dbReference>
<dbReference type="RefSeq" id="NP_001298124.1">
    <property type="nucleotide sequence ID" value="NM_001311195.1"/>
</dbReference>
<dbReference type="RefSeq" id="NP_001298125.1">
    <property type="nucleotide sequence ID" value="NM_001311196.1"/>
</dbReference>
<dbReference type="SMR" id="Q07001"/>
<dbReference type="BioGRID" id="107566">
    <property type="interactions" value="66"/>
</dbReference>
<dbReference type="ComplexPortal" id="CPX-2179">
    <property type="entry name" value="Muscle-type nicotinic acetylcholine receptor complex, alpha1-beta1-delta-gamma"/>
</dbReference>
<dbReference type="ComplexPortal" id="CPX-255">
    <property type="entry name" value="Muscle-type nicotinic acetylcholine receptor complex, alpha1-beta1-delta-epsilon"/>
</dbReference>
<dbReference type="CORUM" id="Q07001"/>
<dbReference type="FunCoup" id="Q07001">
    <property type="interactions" value="440"/>
</dbReference>
<dbReference type="IntAct" id="Q07001">
    <property type="interactions" value="65"/>
</dbReference>
<dbReference type="STRING" id="9606.ENSP00000258385"/>
<dbReference type="BindingDB" id="Q07001"/>
<dbReference type="ChEMBL" id="CHEMBL3011"/>
<dbReference type="DrugCentral" id="Q07001"/>
<dbReference type="GuidetoPHARMACOLOGY" id="476"/>
<dbReference type="TCDB" id="1.A.9.1.1">
    <property type="family name" value="the neurotransmitter receptor, cys loop, ligand-gated ion channel (lic) family"/>
</dbReference>
<dbReference type="GlyCosmos" id="Q07001">
    <property type="glycosylation" value="2 sites, No reported glycans"/>
</dbReference>
<dbReference type="GlyGen" id="Q07001">
    <property type="glycosylation" value="2 sites"/>
</dbReference>
<dbReference type="iPTMnet" id="Q07001"/>
<dbReference type="PhosphoSitePlus" id="Q07001"/>
<dbReference type="BioMuta" id="CHRND"/>
<dbReference type="DMDM" id="543759"/>
<dbReference type="jPOST" id="Q07001"/>
<dbReference type="MassIVE" id="Q07001"/>
<dbReference type="PaxDb" id="9606-ENSP00000258385"/>
<dbReference type="PeptideAtlas" id="Q07001"/>
<dbReference type="ABCD" id="Q07001">
    <property type="antibodies" value="1 sequenced antibody"/>
</dbReference>
<dbReference type="Antibodypedia" id="20219">
    <property type="antibodies" value="193 antibodies from 26 providers"/>
</dbReference>
<dbReference type="DNASU" id="1144"/>
<dbReference type="Ensembl" id="ENST00000258385.8">
    <molecule id="Q07001-1"/>
    <property type="protein sequence ID" value="ENSP00000258385.3"/>
    <property type="gene ID" value="ENSG00000135902.10"/>
</dbReference>
<dbReference type="Ensembl" id="ENST00000543200.5">
    <molecule id="Q07001-2"/>
    <property type="protein sequence ID" value="ENSP00000438380.1"/>
    <property type="gene ID" value="ENSG00000135902.10"/>
</dbReference>
<dbReference type="GeneID" id="1144"/>
<dbReference type="KEGG" id="hsa:1144"/>
<dbReference type="MANE-Select" id="ENST00000258385.8">
    <property type="protein sequence ID" value="ENSP00000258385.3"/>
    <property type="RefSeq nucleotide sequence ID" value="NM_000751.3"/>
    <property type="RefSeq protein sequence ID" value="NP_000742.1"/>
</dbReference>
<dbReference type="UCSC" id="uc002vsw.5">
    <molecule id="Q07001-1"/>
    <property type="organism name" value="human"/>
</dbReference>
<dbReference type="AGR" id="HGNC:1965"/>
<dbReference type="CTD" id="1144"/>
<dbReference type="DisGeNET" id="1144"/>
<dbReference type="GeneCards" id="CHRND"/>
<dbReference type="GeneReviews" id="CHRND"/>
<dbReference type="HGNC" id="HGNC:1965">
    <property type="gene designation" value="CHRND"/>
</dbReference>
<dbReference type="HPA" id="ENSG00000135902">
    <property type="expression patterns" value="Tissue enriched (skeletal)"/>
</dbReference>
<dbReference type="MalaCards" id="CHRND"/>
<dbReference type="MIM" id="100720">
    <property type="type" value="gene"/>
</dbReference>
<dbReference type="MIM" id="253290">
    <property type="type" value="phenotype"/>
</dbReference>
<dbReference type="MIM" id="616321">
    <property type="type" value="phenotype"/>
</dbReference>
<dbReference type="MIM" id="616322">
    <property type="type" value="phenotype"/>
</dbReference>
<dbReference type="MIM" id="616323">
    <property type="type" value="phenotype"/>
</dbReference>
<dbReference type="neXtProt" id="NX_Q07001"/>
<dbReference type="OpenTargets" id="ENSG00000135902"/>
<dbReference type="Orphanet" id="33108">
    <property type="disease" value="Lethal multiple pterygium syndrome"/>
</dbReference>
<dbReference type="Orphanet" id="98913">
    <property type="disease" value="Postsynaptic congenital myasthenic syndromes"/>
</dbReference>
<dbReference type="PharmGKB" id="PA26497"/>
<dbReference type="VEuPathDB" id="HostDB:ENSG00000135902"/>
<dbReference type="eggNOG" id="KOG3645">
    <property type="taxonomic scope" value="Eukaryota"/>
</dbReference>
<dbReference type="GeneTree" id="ENSGT00940000159794"/>
<dbReference type="HOGENOM" id="CLU_018074_1_4_1"/>
<dbReference type="InParanoid" id="Q07001"/>
<dbReference type="OMA" id="NFIVSHM"/>
<dbReference type="OrthoDB" id="5975154at2759"/>
<dbReference type="PAN-GO" id="Q07001">
    <property type="GO annotations" value="9 GO annotations based on evolutionary models"/>
</dbReference>
<dbReference type="PhylomeDB" id="Q07001"/>
<dbReference type="TreeFam" id="TF315605"/>
<dbReference type="PathwayCommons" id="Q07001"/>
<dbReference type="Reactome" id="R-HSA-629587">
    <property type="pathway name" value="Highly sodium permeable postsynaptic acetylcholine nicotinic receptors"/>
</dbReference>
<dbReference type="SignaLink" id="Q07001"/>
<dbReference type="BioGRID-ORCS" id="1144">
    <property type="hits" value="26 hits in 1156 CRISPR screens"/>
</dbReference>
<dbReference type="GeneWiki" id="CHRND"/>
<dbReference type="GenomeRNAi" id="1144"/>
<dbReference type="Pharos" id="Q07001">
    <property type="development level" value="Tclin"/>
</dbReference>
<dbReference type="PRO" id="PR:Q07001"/>
<dbReference type="Proteomes" id="UP000005640">
    <property type="component" value="Chromosome 2"/>
</dbReference>
<dbReference type="RNAct" id="Q07001">
    <property type="molecule type" value="protein"/>
</dbReference>
<dbReference type="Bgee" id="ENSG00000135902">
    <property type="expression patterns" value="Expressed in gastrocnemius and 71 other cell types or tissues"/>
</dbReference>
<dbReference type="ExpressionAtlas" id="Q07001">
    <property type="expression patterns" value="baseline and differential"/>
</dbReference>
<dbReference type="GO" id="GO:0005892">
    <property type="term" value="C:acetylcholine-gated channel complex"/>
    <property type="evidence" value="ECO:0000266"/>
    <property type="project" value="ComplexPortal"/>
</dbReference>
<dbReference type="GO" id="GO:0031594">
    <property type="term" value="C:neuromuscular junction"/>
    <property type="evidence" value="ECO:0000314"/>
    <property type="project" value="SynGO"/>
</dbReference>
<dbReference type="GO" id="GO:0043005">
    <property type="term" value="C:neuron projection"/>
    <property type="evidence" value="ECO:0000318"/>
    <property type="project" value="GO_Central"/>
</dbReference>
<dbReference type="GO" id="GO:0005886">
    <property type="term" value="C:plasma membrane"/>
    <property type="evidence" value="ECO:0000314"/>
    <property type="project" value="HPA"/>
</dbReference>
<dbReference type="GO" id="GO:0045211">
    <property type="term" value="C:postsynaptic membrane"/>
    <property type="evidence" value="ECO:0000303"/>
    <property type="project" value="BHF-UCL"/>
</dbReference>
<dbReference type="GO" id="GO:0099634">
    <property type="term" value="C:postsynaptic specialization membrane"/>
    <property type="evidence" value="ECO:0007669"/>
    <property type="project" value="Ensembl"/>
</dbReference>
<dbReference type="GO" id="GO:0045202">
    <property type="term" value="C:synapse"/>
    <property type="evidence" value="ECO:0000318"/>
    <property type="project" value="GO_Central"/>
</dbReference>
<dbReference type="GO" id="GO:0042166">
    <property type="term" value="F:acetylcholine binding"/>
    <property type="evidence" value="ECO:0007669"/>
    <property type="project" value="Ensembl"/>
</dbReference>
<dbReference type="GO" id="GO:0015464">
    <property type="term" value="F:acetylcholine receptor activity"/>
    <property type="evidence" value="ECO:0000318"/>
    <property type="project" value="GO_Central"/>
</dbReference>
<dbReference type="GO" id="GO:0022848">
    <property type="term" value="F:acetylcholine-gated monoatomic cation-selective channel activity"/>
    <property type="evidence" value="ECO:0000318"/>
    <property type="project" value="GO_Central"/>
</dbReference>
<dbReference type="GO" id="GO:1904315">
    <property type="term" value="F:transmitter-gated monoatomic ion channel activity involved in regulation of postsynaptic membrane potential"/>
    <property type="evidence" value="ECO:0000314"/>
    <property type="project" value="SynGO"/>
</dbReference>
<dbReference type="GO" id="GO:0095500">
    <property type="term" value="P:acetylcholine receptor signaling pathway"/>
    <property type="evidence" value="ECO:0000266"/>
    <property type="project" value="ComplexPortal"/>
</dbReference>
<dbReference type="GO" id="GO:0007268">
    <property type="term" value="P:chemical synaptic transmission"/>
    <property type="evidence" value="ECO:0000318"/>
    <property type="project" value="GO_Central"/>
</dbReference>
<dbReference type="GO" id="GO:0051899">
    <property type="term" value="P:membrane depolarization"/>
    <property type="evidence" value="ECO:0000318"/>
    <property type="project" value="GO_Central"/>
</dbReference>
<dbReference type="GO" id="GO:0034220">
    <property type="term" value="P:monoatomic ion transmembrane transport"/>
    <property type="evidence" value="ECO:0000318"/>
    <property type="project" value="GO_Central"/>
</dbReference>
<dbReference type="GO" id="GO:0006936">
    <property type="term" value="P:muscle contraction"/>
    <property type="evidence" value="ECO:0000304"/>
    <property type="project" value="ProtInc"/>
</dbReference>
<dbReference type="GO" id="GO:0050881">
    <property type="term" value="P:musculoskeletal movement"/>
    <property type="evidence" value="ECO:0000315"/>
    <property type="project" value="BHF-UCL"/>
</dbReference>
<dbReference type="GO" id="GO:0050905">
    <property type="term" value="P:neuromuscular process"/>
    <property type="evidence" value="ECO:0000303"/>
    <property type="project" value="BHF-UCL"/>
</dbReference>
<dbReference type="GO" id="GO:0007165">
    <property type="term" value="P:signal transduction"/>
    <property type="evidence" value="ECO:0000304"/>
    <property type="project" value="ProtInc"/>
</dbReference>
<dbReference type="GO" id="GO:0003009">
    <property type="term" value="P:skeletal muscle contraction"/>
    <property type="evidence" value="ECO:0007669"/>
    <property type="project" value="Ensembl"/>
</dbReference>
<dbReference type="GO" id="GO:0048630">
    <property type="term" value="P:skeletal muscle tissue growth"/>
    <property type="evidence" value="ECO:0000315"/>
    <property type="project" value="BHF-UCL"/>
</dbReference>
<dbReference type="CDD" id="cd19028">
    <property type="entry name" value="LGIC_ECD_nAChR_D"/>
    <property type="match status" value="1"/>
</dbReference>
<dbReference type="CDD" id="cd19064">
    <property type="entry name" value="LGIC_TM_nAChR"/>
    <property type="match status" value="1"/>
</dbReference>
<dbReference type="FunFam" id="1.20.58.390:FF:000029">
    <property type="entry name" value="acetylcholine receptor subunit delta isoform X1"/>
    <property type="match status" value="1"/>
</dbReference>
<dbReference type="FunFam" id="1.20.58.390:FF:000010">
    <property type="entry name" value="Nicotinic acetylcholine receptor subunit epsilon"/>
    <property type="match status" value="1"/>
</dbReference>
<dbReference type="FunFam" id="2.70.170.10:FF:000012">
    <property type="entry name" value="Nicotinic acetylcholine receptor subunit gamma"/>
    <property type="match status" value="1"/>
</dbReference>
<dbReference type="Gene3D" id="2.70.170.10">
    <property type="entry name" value="Neurotransmitter-gated ion-channel ligand-binding domain"/>
    <property type="match status" value="1"/>
</dbReference>
<dbReference type="Gene3D" id="1.20.58.390">
    <property type="entry name" value="Neurotransmitter-gated ion-channel transmembrane domain"/>
    <property type="match status" value="2"/>
</dbReference>
<dbReference type="InterPro" id="IPR006202">
    <property type="entry name" value="Neur_chan_lig-bd"/>
</dbReference>
<dbReference type="InterPro" id="IPR036734">
    <property type="entry name" value="Neur_chan_lig-bd_sf"/>
</dbReference>
<dbReference type="InterPro" id="IPR006201">
    <property type="entry name" value="Neur_channel"/>
</dbReference>
<dbReference type="InterPro" id="IPR036719">
    <property type="entry name" value="Neuro-gated_channel_TM_sf"/>
</dbReference>
<dbReference type="InterPro" id="IPR038050">
    <property type="entry name" value="Neuro_actylchol_rec"/>
</dbReference>
<dbReference type="InterPro" id="IPR006029">
    <property type="entry name" value="Neurotrans-gated_channel_TM"/>
</dbReference>
<dbReference type="InterPro" id="IPR018000">
    <property type="entry name" value="Neurotransmitter_ion_chnl_CS"/>
</dbReference>
<dbReference type="InterPro" id="IPR002394">
    <property type="entry name" value="Nicotinic_acetylcholine_rcpt"/>
</dbReference>
<dbReference type="NCBIfam" id="TIGR00860">
    <property type="entry name" value="LIC"/>
    <property type="match status" value="1"/>
</dbReference>
<dbReference type="PANTHER" id="PTHR18945">
    <property type="entry name" value="NEUROTRANSMITTER GATED ION CHANNEL"/>
    <property type="match status" value="1"/>
</dbReference>
<dbReference type="Pfam" id="PF02931">
    <property type="entry name" value="Neur_chan_LBD"/>
    <property type="match status" value="1"/>
</dbReference>
<dbReference type="Pfam" id="PF02932">
    <property type="entry name" value="Neur_chan_memb"/>
    <property type="match status" value="1"/>
</dbReference>
<dbReference type="PRINTS" id="PR00254">
    <property type="entry name" value="NICOTINICR"/>
</dbReference>
<dbReference type="PRINTS" id="PR00252">
    <property type="entry name" value="NRIONCHANNEL"/>
</dbReference>
<dbReference type="SUPFAM" id="SSF90112">
    <property type="entry name" value="Neurotransmitter-gated ion-channel transmembrane pore"/>
    <property type="match status" value="1"/>
</dbReference>
<dbReference type="SUPFAM" id="SSF63712">
    <property type="entry name" value="Nicotinic receptor ligand binding domain-like"/>
    <property type="match status" value="1"/>
</dbReference>
<dbReference type="PROSITE" id="PS00236">
    <property type="entry name" value="NEUROTR_ION_CHANNEL"/>
    <property type="match status" value="1"/>
</dbReference>
<evidence type="ECO:0000250" key="1"/>
<evidence type="ECO:0000250" key="2">
    <source>
        <dbReference type="UniProtKB" id="P04759"/>
    </source>
</evidence>
<evidence type="ECO:0000255" key="3"/>
<evidence type="ECO:0000269" key="4">
    <source>
    </source>
</evidence>
<evidence type="ECO:0000269" key="5">
    <source>
    </source>
</evidence>
<evidence type="ECO:0000269" key="6">
    <source>
    </source>
</evidence>
<evidence type="ECO:0000269" key="7">
    <source>
    </source>
</evidence>
<evidence type="ECO:0000269" key="8">
    <source>
    </source>
</evidence>
<evidence type="ECO:0000269" key="9">
    <source>
    </source>
</evidence>
<evidence type="ECO:0000269" key="10">
    <source>
    </source>
</evidence>
<evidence type="ECO:0000269" key="11">
    <source>
    </source>
</evidence>
<evidence type="ECO:0000269" key="12">
    <source>
    </source>
</evidence>
<evidence type="ECO:0000269" key="13">
    <source>
    </source>
</evidence>
<evidence type="ECO:0000303" key="14">
    <source>
    </source>
</evidence>
<evidence type="ECO:0000305" key="15"/>
<evidence type="ECO:0000312" key="16">
    <source>
        <dbReference type="HGNC" id="HGNC:1965"/>
    </source>
</evidence>
<proteinExistence type="evidence at protein level"/>
<feature type="signal peptide" evidence="1">
    <location>
        <begin position="1"/>
        <end position="21"/>
    </location>
</feature>
<feature type="chain" id="PRO_0000000322" description="Acetylcholine receptor subunit delta">
    <location>
        <begin position="22"/>
        <end position="517"/>
    </location>
</feature>
<feature type="topological domain" description="Extracellular" evidence="3">
    <location>
        <begin position="22"/>
        <end position="245"/>
    </location>
</feature>
<feature type="transmembrane region" description="Helical" evidence="3">
    <location>
        <begin position="246"/>
        <end position="270"/>
    </location>
</feature>
<feature type="transmembrane region" description="Helical" evidence="3">
    <location>
        <begin position="278"/>
        <end position="299"/>
    </location>
</feature>
<feature type="transmembrane region" description="Helical" evidence="3">
    <location>
        <begin position="312"/>
        <end position="333"/>
    </location>
</feature>
<feature type="topological domain" description="Cytoplasmic" evidence="3">
    <location>
        <begin position="334"/>
        <end position="471"/>
    </location>
</feature>
<feature type="transmembrane region" description="Helical" evidence="3">
    <location>
        <begin position="472"/>
        <end position="490"/>
    </location>
</feature>
<feature type="modified residue" description="Phosphotyrosine; by Tyr-kinases" evidence="1">
    <location>
        <position position="390"/>
    </location>
</feature>
<feature type="glycosylation site" description="N-linked (GlcNAc...) asparagine" evidence="3">
    <location>
        <position position="97"/>
    </location>
</feature>
<feature type="glycosylation site" description="N-linked (GlcNAc...) asparagine" evidence="3">
    <location>
        <position position="164"/>
    </location>
</feature>
<feature type="disulfide bond" evidence="1">
    <location>
        <begin position="151"/>
        <end position="165"/>
    </location>
</feature>
<feature type="splice variant" id="VSP_046423" description="In isoform 2." evidence="14">
    <location>
        <begin position="67"/>
        <end position="81"/>
    </location>
</feature>
<feature type="sequence variant" id="VAR_073691" description="In CMS3B; results in reduced gating efficiency; slows opening of the channel; decreases probability that the channel will open in response to ACh." evidence="11">
    <original>L</original>
    <variation>P</variation>
    <location>
        <position position="42"/>
    </location>
</feature>
<feature type="sequence variant" id="VAR_073692" description="In CMS3B; prevents expression of the AChR on the cell surface; is a null mutation; dbSNP:rs121909509." evidence="11">
    <original>I</original>
    <variation>K</variation>
    <location>
        <position position="79"/>
    </location>
</feature>
<feature type="sequence variant" id="VAR_021210" description="In CMS3B; reduced adult and fetal AChR expression and a reduced probability of both adult and fetal AChR being in the open state; dbSNP:rs121909504." evidence="4">
    <original>E</original>
    <variation>K</variation>
    <location>
        <position position="80"/>
    </location>
</feature>
<feature type="sequence variant" id="VAR_043905" description="In LMPS; dbSNP:rs121909506." evidence="10">
    <original>F</original>
    <variation>L</variation>
    <location>
        <position position="95"/>
    </location>
</feature>
<feature type="sequence variant" id="VAR_073693" description="Has no appreciable kinetic effects; allows for robust AChR expression; dbSNP:rs760395222." evidence="11">
    <original>V</original>
    <variation>L</variation>
    <location>
        <position position="114"/>
    </location>
</feature>
<feature type="sequence variant" id="VAR_021211" description="In CMS3B; burst duration was decreased and disassociation of ACh was increased resulting in brief channel opening episodes; shows abnormal association with alpha CHRNA1 subunit resulting in a decreased number of fully assembled AChRs; dbSNP:rs121909503." evidence="6">
    <original>P</original>
    <variation>Q</variation>
    <location>
        <position position="271"/>
    </location>
</feature>
<feature type="sequence variant" id="VAR_021212" description="In dbSNP:rs41265127." evidence="13">
    <original>Q</original>
    <variation>E</variation>
    <location>
        <position position="288"/>
    </location>
</feature>
<feature type="sequence variant" id="VAR_019566" description="In CMS3A; delayed closure of AchR ion channels, increasing the propensity for open-channel block, as well as a reduced rate of channel opening; dbSNP:rs121909502." evidence="5">
    <original>S</original>
    <variation>F</variation>
    <location>
        <position position="289"/>
    </location>
</feature>
<feature type="sequence variant" id="VAR_036031" description="In a breast cancer sample; somatic mutation; dbSNP:rs749461400." evidence="9">
    <original>D</original>
    <variation>E</variation>
    <location>
        <position position="398"/>
    </location>
</feature>
<feature type="sequence variant" id="VAR_073694" description="In CMS3C; results in reduced expression of the AChR at the cell surface; impairs normal clustering of the AChR channel with RAPSN; dbSNP:rs145955590." evidence="8">
    <original>E</original>
    <variation>K</variation>
    <location>
        <position position="402"/>
    </location>
</feature>
<feature type="mutagenesis site" description="Increased length of channel opening." evidence="12">
    <original>V</original>
    <variation>A</variation>
    <location>
        <position position="290"/>
    </location>
</feature>
<protein>
    <recommendedName>
        <fullName evidence="15">Acetylcholine receptor subunit delta</fullName>
    </recommendedName>
</protein>
<accession>Q07001</accession>
<accession>A8K661</accession>
<accession>B4DT92</accession>
<accession>Q52LH4</accession>